<organism>
    <name type="scientific">Thermoanaerobacter sp. (strain X514)</name>
    <dbReference type="NCBI Taxonomy" id="399726"/>
    <lineage>
        <taxon>Bacteria</taxon>
        <taxon>Bacillati</taxon>
        <taxon>Bacillota</taxon>
        <taxon>Clostridia</taxon>
        <taxon>Thermoanaerobacterales</taxon>
        <taxon>Thermoanaerobacteraceae</taxon>
        <taxon>Thermoanaerobacter</taxon>
    </lineage>
</organism>
<sequence length="255" mass="27849">MLLVFDVGNTNIVMGIYKGKKLLHSFRISTEKSKTSDEYGMLINQLFEYNGLKLKDVDAVIISSVVPPIMHTLESMTIKYCNTKPLIVGPGIKTGINIKYDNPKEVGADRIVNAVAAYEIYGGPVIVIDFGTATTFCAISKNCEYLGGIIAPGLAISADALFQRTAKLPKIELTKPSTVICKNTVSSMQSGIIYGHVGMVDYIVSRMKEEFAPNAYVVATGGFARMIAEESKTINTVNDMLTLEGLRIIYERNAD</sequence>
<dbReference type="EC" id="2.7.1.33" evidence="1"/>
<dbReference type="EMBL" id="CP000923">
    <property type="protein sequence ID" value="ABY92104.1"/>
    <property type="molecule type" value="Genomic_DNA"/>
</dbReference>
<dbReference type="RefSeq" id="WP_003867807.1">
    <property type="nucleotide sequence ID" value="NC_010320.1"/>
</dbReference>
<dbReference type="SMR" id="B0K5B1"/>
<dbReference type="KEGG" id="tex:Teth514_0801"/>
<dbReference type="HOGENOM" id="CLU_066627_1_0_9"/>
<dbReference type="UniPathway" id="UPA00241">
    <property type="reaction ID" value="UER00352"/>
</dbReference>
<dbReference type="Proteomes" id="UP000002155">
    <property type="component" value="Chromosome"/>
</dbReference>
<dbReference type="GO" id="GO:0005737">
    <property type="term" value="C:cytoplasm"/>
    <property type="evidence" value="ECO:0007669"/>
    <property type="project" value="UniProtKB-SubCell"/>
</dbReference>
<dbReference type="GO" id="GO:0005524">
    <property type="term" value="F:ATP binding"/>
    <property type="evidence" value="ECO:0007669"/>
    <property type="project" value="UniProtKB-UniRule"/>
</dbReference>
<dbReference type="GO" id="GO:0046872">
    <property type="term" value="F:metal ion binding"/>
    <property type="evidence" value="ECO:0007669"/>
    <property type="project" value="UniProtKB-KW"/>
</dbReference>
<dbReference type="GO" id="GO:0004594">
    <property type="term" value="F:pantothenate kinase activity"/>
    <property type="evidence" value="ECO:0007669"/>
    <property type="project" value="UniProtKB-UniRule"/>
</dbReference>
<dbReference type="GO" id="GO:0015937">
    <property type="term" value="P:coenzyme A biosynthetic process"/>
    <property type="evidence" value="ECO:0007669"/>
    <property type="project" value="UniProtKB-UniRule"/>
</dbReference>
<dbReference type="CDD" id="cd24015">
    <property type="entry name" value="ASKHA_NBD_PanK-III"/>
    <property type="match status" value="1"/>
</dbReference>
<dbReference type="Gene3D" id="3.30.420.40">
    <property type="match status" value="2"/>
</dbReference>
<dbReference type="HAMAP" id="MF_01274">
    <property type="entry name" value="Pantothen_kinase_3"/>
    <property type="match status" value="1"/>
</dbReference>
<dbReference type="InterPro" id="IPR043129">
    <property type="entry name" value="ATPase_NBD"/>
</dbReference>
<dbReference type="InterPro" id="IPR004619">
    <property type="entry name" value="Type_III_PanK"/>
</dbReference>
<dbReference type="NCBIfam" id="TIGR00671">
    <property type="entry name" value="baf"/>
    <property type="match status" value="1"/>
</dbReference>
<dbReference type="NCBIfam" id="NF009847">
    <property type="entry name" value="PRK13318.1-5"/>
    <property type="match status" value="1"/>
</dbReference>
<dbReference type="NCBIfam" id="NF009848">
    <property type="entry name" value="PRK13318.1-6"/>
    <property type="match status" value="1"/>
</dbReference>
<dbReference type="NCBIfam" id="NF009855">
    <property type="entry name" value="PRK13321.1"/>
    <property type="match status" value="1"/>
</dbReference>
<dbReference type="PANTHER" id="PTHR34265">
    <property type="entry name" value="TYPE III PANTOTHENATE KINASE"/>
    <property type="match status" value="1"/>
</dbReference>
<dbReference type="PANTHER" id="PTHR34265:SF1">
    <property type="entry name" value="TYPE III PANTOTHENATE KINASE"/>
    <property type="match status" value="1"/>
</dbReference>
<dbReference type="Pfam" id="PF03309">
    <property type="entry name" value="Pan_kinase"/>
    <property type="match status" value="1"/>
</dbReference>
<dbReference type="SUPFAM" id="SSF53067">
    <property type="entry name" value="Actin-like ATPase domain"/>
    <property type="match status" value="2"/>
</dbReference>
<feature type="chain" id="PRO_1000140262" description="Type III pantothenate kinase">
    <location>
        <begin position="1"/>
        <end position="255"/>
    </location>
</feature>
<feature type="active site" description="Proton acceptor" evidence="1">
    <location>
        <position position="109"/>
    </location>
</feature>
<feature type="binding site" evidence="1">
    <location>
        <begin position="6"/>
        <end position="13"/>
    </location>
    <ligand>
        <name>ATP</name>
        <dbReference type="ChEBI" id="CHEBI:30616"/>
    </ligand>
</feature>
<feature type="binding site" evidence="1">
    <location>
        <position position="100"/>
    </location>
    <ligand>
        <name>substrate</name>
    </ligand>
</feature>
<feature type="binding site" evidence="1">
    <location>
        <begin position="107"/>
        <end position="110"/>
    </location>
    <ligand>
        <name>substrate</name>
    </ligand>
</feature>
<feature type="binding site" evidence="1">
    <location>
        <position position="129"/>
    </location>
    <ligand>
        <name>K(+)</name>
        <dbReference type="ChEBI" id="CHEBI:29103"/>
    </ligand>
</feature>
<feature type="binding site" evidence="1">
    <location>
        <position position="132"/>
    </location>
    <ligand>
        <name>ATP</name>
        <dbReference type="ChEBI" id="CHEBI:30616"/>
    </ligand>
</feature>
<feature type="binding site" evidence="1">
    <location>
        <position position="184"/>
    </location>
    <ligand>
        <name>substrate</name>
    </ligand>
</feature>
<protein>
    <recommendedName>
        <fullName evidence="1">Type III pantothenate kinase</fullName>
        <ecNumber evidence="1">2.7.1.33</ecNumber>
    </recommendedName>
    <alternativeName>
        <fullName evidence="1">PanK-III</fullName>
    </alternativeName>
    <alternativeName>
        <fullName evidence="1">Pantothenic acid kinase</fullName>
    </alternativeName>
</protein>
<evidence type="ECO:0000255" key="1">
    <source>
        <dbReference type="HAMAP-Rule" id="MF_01274"/>
    </source>
</evidence>
<reference key="1">
    <citation type="submission" date="2008-01" db="EMBL/GenBank/DDBJ databases">
        <title>Complete sequence of Thermoanaerobacter sp. X514.</title>
        <authorList>
            <consortium name="US DOE Joint Genome Institute"/>
            <person name="Copeland A."/>
            <person name="Lucas S."/>
            <person name="Lapidus A."/>
            <person name="Barry K."/>
            <person name="Glavina del Rio T."/>
            <person name="Dalin E."/>
            <person name="Tice H."/>
            <person name="Pitluck S."/>
            <person name="Bruce D."/>
            <person name="Goodwin L."/>
            <person name="Saunders E."/>
            <person name="Brettin T."/>
            <person name="Detter J.C."/>
            <person name="Han C."/>
            <person name="Schmutz J."/>
            <person name="Larimer F."/>
            <person name="Land M."/>
            <person name="Hauser L."/>
            <person name="Kyrpides N."/>
            <person name="Kim E."/>
            <person name="Hemme C."/>
            <person name="Fields M.W."/>
            <person name="He Z."/>
            <person name="Zhou J."/>
            <person name="Richardson P."/>
        </authorList>
    </citation>
    <scope>NUCLEOTIDE SEQUENCE [LARGE SCALE GENOMIC DNA]</scope>
    <source>
        <strain>X514</strain>
    </source>
</reference>
<keyword id="KW-0067">ATP-binding</keyword>
<keyword id="KW-0173">Coenzyme A biosynthesis</keyword>
<keyword id="KW-0963">Cytoplasm</keyword>
<keyword id="KW-0418">Kinase</keyword>
<keyword id="KW-0479">Metal-binding</keyword>
<keyword id="KW-0547">Nucleotide-binding</keyword>
<keyword id="KW-0630">Potassium</keyword>
<keyword id="KW-0808">Transferase</keyword>
<proteinExistence type="inferred from homology"/>
<gene>
    <name evidence="1" type="primary">coaX</name>
    <name type="ordered locus">Teth514_0801</name>
</gene>
<accession>B0K5B1</accession>
<comment type="function">
    <text evidence="1">Catalyzes the phosphorylation of pantothenate (Pan), the first step in CoA biosynthesis.</text>
</comment>
<comment type="catalytic activity">
    <reaction evidence="1">
        <text>(R)-pantothenate + ATP = (R)-4'-phosphopantothenate + ADP + H(+)</text>
        <dbReference type="Rhea" id="RHEA:16373"/>
        <dbReference type="ChEBI" id="CHEBI:10986"/>
        <dbReference type="ChEBI" id="CHEBI:15378"/>
        <dbReference type="ChEBI" id="CHEBI:29032"/>
        <dbReference type="ChEBI" id="CHEBI:30616"/>
        <dbReference type="ChEBI" id="CHEBI:456216"/>
        <dbReference type="EC" id="2.7.1.33"/>
    </reaction>
</comment>
<comment type="cofactor">
    <cofactor evidence="1">
        <name>NH4(+)</name>
        <dbReference type="ChEBI" id="CHEBI:28938"/>
    </cofactor>
    <cofactor evidence="1">
        <name>K(+)</name>
        <dbReference type="ChEBI" id="CHEBI:29103"/>
    </cofactor>
    <text evidence="1">A monovalent cation. Ammonium or potassium.</text>
</comment>
<comment type="pathway">
    <text evidence="1">Cofactor biosynthesis; coenzyme A biosynthesis; CoA from (R)-pantothenate: step 1/5.</text>
</comment>
<comment type="subunit">
    <text evidence="1">Homodimer.</text>
</comment>
<comment type="subcellular location">
    <subcellularLocation>
        <location evidence="1">Cytoplasm</location>
    </subcellularLocation>
</comment>
<comment type="similarity">
    <text evidence="1">Belongs to the type III pantothenate kinase family.</text>
</comment>
<name>COAX_THEPX</name>